<name>PUR1_STAAW</name>
<keyword id="KW-0315">Glutamine amidotransferase</keyword>
<keyword id="KW-0328">Glycosyltransferase</keyword>
<keyword id="KW-0460">Magnesium</keyword>
<keyword id="KW-0479">Metal-binding</keyword>
<keyword id="KW-0658">Purine biosynthesis</keyword>
<keyword id="KW-0808">Transferase</keyword>
<organism>
    <name type="scientific">Staphylococcus aureus (strain MW2)</name>
    <dbReference type="NCBI Taxonomy" id="196620"/>
    <lineage>
        <taxon>Bacteria</taxon>
        <taxon>Bacillati</taxon>
        <taxon>Bacillota</taxon>
        <taxon>Bacilli</taxon>
        <taxon>Bacillales</taxon>
        <taxon>Staphylococcaceae</taxon>
        <taxon>Staphylococcus</taxon>
    </lineage>
</organism>
<feature type="propeptide" id="PRO_0000029267" evidence="1">
    <location>
        <begin position="1"/>
        <end position="10"/>
    </location>
</feature>
<feature type="chain" id="PRO_0000029268" description="Amidophosphoribosyltransferase">
    <location>
        <begin position="11"/>
        <end position="494"/>
    </location>
</feature>
<feature type="domain" description="Glutamine amidotransferase type-2" evidence="2">
    <location>
        <begin position="11"/>
        <end position="231"/>
    </location>
</feature>
<feature type="active site" description="Nucleophile" evidence="2">
    <location>
        <position position="11"/>
    </location>
</feature>
<feature type="binding site" evidence="2">
    <location>
        <position position="294"/>
    </location>
    <ligand>
        <name>Mg(2+)</name>
        <dbReference type="ChEBI" id="CHEBI:18420"/>
    </ligand>
</feature>
<feature type="binding site" evidence="2">
    <location>
        <position position="356"/>
    </location>
    <ligand>
        <name>Mg(2+)</name>
        <dbReference type="ChEBI" id="CHEBI:18420"/>
    </ligand>
</feature>
<feature type="binding site" evidence="2">
    <location>
        <position position="357"/>
    </location>
    <ligand>
        <name>Mg(2+)</name>
        <dbReference type="ChEBI" id="CHEBI:18420"/>
    </ligand>
</feature>
<sequence length="494" mass="54397">MFNYSGLNEECGVFGIWNHPEAAQLTYMGLHSLQHRGQEGAGIVVSDQNELKGERGLGLLTEAIKDDQMERLKGYQHAIGHVRYATSGNKGIENIQPFLYHFYDMSVGICHNGNLINAKSLRQNLEKQGAIFHSSSDTEVIMHLIRRSKAPTFEEALKESLRKVKGGFTFAILTKDALYGAVDPNAIRPLVVGKMKDGTYILASETCAIDVLGAEFVQDIHAGEYVVINDKGITVKSYTHHTTTAISAMEYIYFARPDSTIAGKNVHAVRKASGKKLAQESPVNADMVIGVPNSSLSAASGYAEEIGLPYEMGLVKNQYVARTFIQPTQELREQGVRVKLSAVKDIVDGKNIILVDDSIVRGTTIRRIVKMLKDSGANKVHVRIASPEFMFPSFYGIDVSTTAELISASKSPEEIKDYIGADSLAYLSVDGLIESIGLDYDAPYSGLCVESFTGDYPAGLYDYEANYKAHLSHRQKQYISKNKHFFDSEGNLNV</sequence>
<proteinExistence type="inferred from homology"/>
<protein>
    <recommendedName>
        <fullName evidence="2">Amidophosphoribosyltransferase</fullName>
        <shortName evidence="2">ATase</shortName>
        <ecNumber evidence="2">2.4.2.14</ecNumber>
    </recommendedName>
    <alternativeName>
        <fullName evidence="2">Glutamine phosphoribosylpyrophosphate amidotransferase</fullName>
        <shortName evidence="2">GPATase</shortName>
    </alternativeName>
</protein>
<dbReference type="EC" id="2.4.2.14" evidence="2"/>
<dbReference type="EMBL" id="BA000033">
    <property type="protein sequence ID" value="BAB94818.1"/>
    <property type="molecule type" value="Genomic_DNA"/>
</dbReference>
<dbReference type="RefSeq" id="WP_000483713.1">
    <property type="nucleotide sequence ID" value="NC_003923.1"/>
</dbReference>
<dbReference type="SMR" id="Q8NX91"/>
<dbReference type="MEROPS" id="C44.001"/>
<dbReference type="KEGG" id="sam:MW0953"/>
<dbReference type="HOGENOM" id="CLU_022389_3_1_9"/>
<dbReference type="UniPathway" id="UPA00074">
    <property type="reaction ID" value="UER00124"/>
</dbReference>
<dbReference type="GO" id="GO:0004044">
    <property type="term" value="F:amidophosphoribosyltransferase activity"/>
    <property type="evidence" value="ECO:0007669"/>
    <property type="project" value="UniProtKB-UniRule"/>
</dbReference>
<dbReference type="GO" id="GO:0000287">
    <property type="term" value="F:magnesium ion binding"/>
    <property type="evidence" value="ECO:0007669"/>
    <property type="project" value="UniProtKB-UniRule"/>
</dbReference>
<dbReference type="GO" id="GO:0006189">
    <property type="term" value="P:'de novo' IMP biosynthetic process"/>
    <property type="evidence" value="ECO:0007669"/>
    <property type="project" value="UniProtKB-UniRule"/>
</dbReference>
<dbReference type="GO" id="GO:0009113">
    <property type="term" value="P:purine nucleobase biosynthetic process"/>
    <property type="evidence" value="ECO:0007669"/>
    <property type="project" value="InterPro"/>
</dbReference>
<dbReference type="CDD" id="cd00715">
    <property type="entry name" value="GPATase_N"/>
    <property type="match status" value="1"/>
</dbReference>
<dbReference type="CDD" id="cd06223">
    <property type="entry name" value="PRTases_typeI"/>
    <property type="match status" value="1"/>
</dbReference>
<dbReference type="Gene3D" id="3.40.50.2020">
    <property type="match status" value="1"/>
</dbReference>
<dbReference type="Gene3D" id="3.60.20.10">
    <property type="entry name" value="Glutamine Phosphoribosylpyrophosphate, subunit 1, domain 1"/>
    <property type="match status" value="1"/>
</dbReference>
<dbReference type="HAMAP" id="MF_01931">
    <property type="entry name" value="PurF"/>
    <property type="match status" value="1"/>
</dbReference>
<dbReference type="InterPro" id="IPR017932">
    <property type="entry name" value="GATase_2_dom"/>
</dbReference>
<dbReference type="InterPro" id="IPR029055">
    <property type="entry name" value="Ntn_hydrolases_N"/>
</dbReference>
<dbReference type="InterPro" id="IPR000836">
    <property type="entry name" value="PRibTrfase_dom"/>
</dbReference>
<dbReference type="InterPro" id="IPR029057">
    <property type="entry name" value="PRTase-like"/>
</dbReference>
<dbReference type="InterPro" id="IPR005854">
    <property type="entry name" value="PurF"/>
</dbReference>
<dbReference type="InterPro" id="IPR035584">
    <property type="entry name" value="PurF_N"/>
</dbReference>
<dbReference type="NCBIfam" id="TIGR01134">
    <property type="entry name" value="purF"/>
    <property type="match status" value="1"/>
</dbReference>
<dbReference type="PANTHER" id="PTHR11907">
    <property type="entry name" value="AMIDOPHOSPHORIBOSYLTRANSFERASE"/>
    <property type="match status" value="1"/>
</dbReference>
<dbReference type="Pfam" id="PF13537">
    <property type="entry name" value="GATase_7"/>
    <property type="match status" value="1"/>
</dbReference>
<dbReference type="Pfam" id="PF00156">
    <property type="entry name" value="Pribosyltran"/>
    <property type="match status" value="1"/>
</dbReference>
<dbReference type="PIRSF" id="PIRSF000485">
    <property type="entry name" value="Amd_phspho_trans"/>
    <property type="match status" value="1"/>
</dbReference>
<dbReference type="SUPFAM" id="SSF56235">
    <property type="entry name" value="N-terminal nucleophile aminohydrolases (Ntn hydrolases)"/>
    <property type="match status" value="1"/>
</dbReference>
<dbReference type="SUPFAM" id="SSF53271">
    <property type="entry name" value="PRTase-like"/>
    <property type="match status" value="1"/>
</dbReference>
<dbReference type="PROSITE" id="PS51278">
    <property type="entry name" value="GATASE_TYPE_2"/>
    <property type="match status" value="1"/>
</dbReference>
<dbReference type="PROSITE" id="PS00103">
    <property type="entry name" value="PUR_PYR_PR_TRANSFER"/>
    <property type="match status" value="1"/>
</dbReference>
<gene>
    <name evidence="2" type="primary">purF</name>
    <name type="ordered locus">MW0953</name>
</gene>
<evidence type="ECO:0000250" key="1"/>
<evidence type="ECO:0000255" key="2">
    <source>
        <dbReference type="HAMAP-Rule" id="MF_01931"/>
    </source>
</evidence>
<accession>Q8NX91</accession>
<reference key="1">
    <citation type="journal article" date="2002" name="Lancet">
        <title>Genome and virulence determinants of high virulence community-acquired MRSA.</title>
        <authorList>
            <person name="Baba T."/>
            <person name="Takeuchi F."/>
            <person name="Kuroda M."/>
            <person name="Yuzawa H."/>
            <person name="Aoki K."/>
            <person name="Oguchi A."/>
            <person name="Nagai Y."/>
            <person name="Iwama N."/>
            <person name="Asano K."/>
            <person name="Naimi T."/>
            <person name="Kuroda H."/>
            <person name="Cui L."/>
            <person name="Yamamoto K."/>
            <person name="Hiramatsu K."/>
        </authorList>
    </citation>
    <scope>NUCLEOTIDE SEQUENCE [LARGE SCALE GENOMIC DNA]</scope>
    <source>
        <strain>MW2</strain>
    </source>
</reference>
<comment type="function">
    <text evidence="2">Catalyzes the formation of phosphoribosylamine from phosphoribosylpyrophosphate (PRPP) and glutamine.</text>
</comment>
<comment type="catalytic activity">
    <reaction evidence="2">
        <text>5-phospho-beta-D-ribosylamine + L-glutamate + diphosphate = 5-phospho-alpha-D-ribose 1-diphosphate + L-glutamine + H2O</text>
        <dbReference type="Rhea" id="RHEA:14905"/>
        <dbReference type="ChEBI" id="CHEBI:15377"/>
        <dbReference type="ChEBI" id="CHEBI:29985"/>
        <dbReference type="ChEBI" id="CHEBI:33019"/>
        <dbReference type="ChEBI" id="CHEBI:58017"/>
        <dbReference type="ChEBI" id="CHEBI:58359"/>
        <dbReference type="ChEBI" id="CHEBI:58681"/>
        <dbReference type="EC" id="2.4.2.14"/>
    </reaction>
</comment>
<comment type="cofactor">
    <cofactor evidence="2">
        <name>Mg(2+)</name>
        <dbReference type="ChEBI" id="CHEBI:18420"/>
    </cofactor>
    <text evidence="2">Binds 1 Mg(2+) ion per subunit.</text>
</comment>
<comment type="pathway">
    <text evidence="2">Purine metabolism; IMP biosynthesis via de novo pathway; N(1)-(5-phospho-D-ribosyl)glycinamide from 5-phospho-alpha-D-ribose 1-diphosphate: step 1/2.</text>
</comment>
<comment type="similarity">
    <text evidence="2">In the C-terminal section; belongs to the purine/pyrimidine phosphoribosyltransferase family.</text>
</comment>